<protein>
    <recommendedName>
        <fullName evidence="1">Putrescine aminotransferase</fullName>
        <shortName evidence="1">PAT</shortName>
        <shortName evidence="1">PATase</shortName>
        <ecNumber evidence="1">2.6.1.82</ecNumber>
    </recommendedName>
    <alternativeName>
        <fullName evidence="1">Cadaverine transaminase</fullName>
    </alternativeName>
    <alternativeName>
        <fullName evidence="1">Diamine transaminase</fullName>
        <ecNumber evidence="1">2.6.1.29</ecNumber>
    </alternativeName>
    <alternativeName>
        <fullName evidence="1">Putrescine transaminase</fullName>
    </alternativeName>
    <alternativeName>
        <fullName evidence="1">Putrescine--2-oxoglutaric acid transaminase</fullName>
    </alternativeName>
</protein>
<reference key="1">
    <citation type="journal article" date="2009" name="PLoS ONE">
        <title>Salmonella paratyphi C: genetic divergence from Salmonella choleraesuis and pathogenic convergence with Salmonella typhi.</title>
        <authorList>
            <person name="Liu W.-Q."/>
            <person name="Feng Y."/>
            <person name="Wang Y."/>
            <person name="Zou Q.-H."/>
            <person name="Chen F."/>
            <person name="Guo J.-T."/>
            <person name="Peng Y.-H."/>
            <person name="Jin Y."/>
            <person name="Li Y.-G."/>
            <person name="Hu S.-N."/>
            <person name="Johnston R.N."/>
            <person name="Liu G.-R."/>
            <person name="Liu S.-L."/>
        </authorList>
    </citation>
    <scope>NUCLEOTIDE SEQUENCE [LARGE SCALE GENOMIC DNA]</scope>
    <source>
        <strain>RKS4594</strain>
    </source>
</reference>
<organism>
    <name type="scientific">Salmonella paratyphi C (strain RKS4594)</name>
    <dbReference type="NCBI Taxonomy" id="476213"/>
    <lineage>
        <taxon>Bacteria</taxon>
        <taxon>Pseudomonadati</taxon>
        <taxon>Pseudomonadota</taxon>
        <taxon>Gammaproteobacteria</taxon>
        <taxon>Enterobacterales</taxon>
        <taxon>Enterobacteriaceae</taxon>
        <taxon>Salmonella</taxon>
    </lineage>
</organism>
<gene>
    <name evidence="1" type="primary">patA</name>
    <name type="ordered locus">SPC_3294</name>
</gene>
<accession>C0PYZ1</accession>
<feature type="chain" id="PRO_0000379564" description="Putrescine aminotransferase">
    <location>
        <begin position="1"/>
        <end position="459"/>
    </location>
</feature>
<feature type="binding site" description="in other chain" evidence="1">
    <location>
        <begin position="150"/>
        <end position="151"/>
    </location>
    <ligand>
        <name>pyridoxal 5'-phosphate</name>
        <dbReference type="ChEBI" id="CHEBI:597326"/>
        <note>ligand shared between dimeric partners</note>
    </ligand>
</feature>
<feature type="binding site" description="in other chain" evidence="1">
    <location>
        <position position="274"/>
    </location>
    <ligand>
        <name>pyridoxal 5'-phosphate</name>
        <dbReference type="ChEBI" id="CHEBI:597326"/>
        <note>ligand shared between dimeric partners</note>
    </ligand>
</feature>
<feature type="binding site" evidence="1">
    <location>
        <position position="332"/>
    </location>
    <ligand>
        <name>pyridoxal 5'-phosphate</name>
        <dbReference type="ChEBI" id="CHEBI:597326"/>
        <note>ligand shared between dimeric partners</note>
    </ligand>
</feature>
<feature type="modified residue" description="N6-(pyridoxal phosphate)lysine" evidence="1">
    <location>
        <position position="300"/>
    </location>
</feature>
<evidence type="ECO:0000255" key="1">
    <source>
        <dbReference type="HAMAP-Rule" id="MF_01276"/>
    </source>
</evidence>
<evidence type="ECO:0000305" key="2"/>
<proteinExistence type="inferred from homology"/>
<keyword id="KW-0032">Aminotransferase</keyword>
<keyword id="KW-0663">Pyridoxal phosphate</keyword>
<keyword id="KW-0808">Transferase</keyword>
<comment type="function">
    <text evidence="1">Catalyzes the aminotransferase reaction from putrescine to 2-oxoglutarate, leading to glutamate and 4-aminobutanal, which spontaneously cyclizes to form 1-pyrroline. This is the first step in one of two pathways for putrescine degradation, where putrescine is converted into 4-aminobutanoate (gamma-aminobutyrate or GABA) via 4-aminobutanal. Also functions as a cadaverine transaminase in a a L-lysine degradation pathway to succinate that proceeds via cadaverine, glutarate and L-2-hydroxyglutarate.</text>
</comment>
<comment type="catalytic activity">
    <reaction evidence="1">
        <text>an alkane-alpha,omega-diamine + 2-oxoglutarate = an omega-aminoaldehyde + L-glutamate</text>
        <dbReference type="Rhea" id="RHEA:18217"/>
        <dbReference type="Rhea" id="RHEA-COMP:9766"/>
        <dbReference type="Rhea" id="RHEA-COMP:12750"/>
        <dbReference type="ChEBI" id="CHEBI:16810"/>
        <dbReference type="ChEBI" id="CHEBI:29985"/>
        <dbReference type="ChEBI" id="CHEBI:70977"/>
        <dbReference type="ChEBI" id="CHEBI:133427"/>
        <dbReference type="EC" id="2.6.1.29"/>
    </reaction>
    <physiologicalReaction direction="left-to-right" evidence="1">
        <dbReference type="Rhea" id="RHEA:18218"/>
    </physiologicalReaction>
</comment>
<comment type="catalytic activity">
    <reaction evidence="1">
        <text>putrescine + 2-oxoglutarate = 1-pyrroline + L-glutamate + H2O</text>
        <dbReference type="Rhea" id="RHEA:12268"/>
        <dbReference type="ChEBI" id="CHEBI:15377"/>
        <dbReference type="ChEBI" id="CHEBI:16810"/>
        <dbReference type="ChEBI" id="CHEBI:29985"/>
        <dbReference type="ChEBI" id="CHEBI:36781"/>
        <dbReference type="ChEBI" id="CHEBI:326268"/>
        <dbReference type="EC" id="2.6.1.82"/>
    </reaction>
    <physiologicalReaction direction="left-to-right" evidence="1">
        <dbReference type="Rhea" id="RHEA:12269"/>
    </physiologicalReaction>
</comment>
<comment type="catalytic activity">
    <reaction evidence="1">
        <text>cadaverine + 2-oxoglutarate = 5-aminopentanal + L-glutamate</text>
        <dbReference type="Rhea" id="RHEA:61624"/>
        <dbReference type="ChEBI" id="CHEBI:16810"/>
        <dbReference type="ChEBI" id="CHEBI:29985"/>
        <dbReference type="ChEBI" id="CHEBI:58384"/>
        <dbReference type="ChEBI" id="CHEBI:144896"/>
    </reaction>
    <physiologicalReaction direction="left-to-right" evidence="1">
        <dbReference type="Rhea" id="RHEA:61625"/>
    </physiologicalReaction>
</comment>
<comment type="cofactor">
    <cofactor evidence="1">
        <name>pyridoxal 5'-phosphate</name>
        <dbReference type="ChEBI" id="CHEBI:597326"/>
    </cofactor>
</comment>
<comment type="pathway">
    <text evidence="1">Amine and polyamine degradation; putrescine degradation; 4-aminobutanal from putrescine (transaminase route): step 1/1.</text>
</comment>
<comment type="similarity">
    <text evidence="1">Belongs to the class-III pyridoxal-phosphate-dependent aminotransferase family. Putrescine aminotransferase subfamily.</text>
</comment>
<comment type="sequence caution" evidence="2">
    <conflict type="erroneous initiation">
        <sequence resource="EMBL-CDS" id="ACN47379"/>
    </conflict>
</comment>
<dbReference type="EC" id="2.6.1.82" evidence="1"/>
<dbReference type="EC" id="2.6.1.29" evidence="1"/>
<dbReference type="EMBL" id="CP000857">
    <property type="protein sequence ID" value="ACN47379.1"/>
    <property type="status" value="ALT_INIT"/>
    <property type="molecule type" value="Genomic_DNA"/>
</dbReference>
<dbReference type="SMR" id="C0PYZ1"/>
<dbReference type="KEGG" id="sei:SPC_3294"/>
<dbReference type="HOGENOM" id="CLU_016922_10_0_6"/>
<dbReference type="UniPathway" id="UPA00188">
    <property type="reaction ID" value="UER00290"/>
</dbReference>
<dbReference type="Proteomes" id="UP000001599">
    <property type="component" value="Chromosome"/>
</dbReference>
<dbReference type="GO" id="GO:0019161">
    <property type="term" value="F:diamine transaminase activity"/>
    <property type="evidence" value="ECO:0007669"/>
    <property type="project" value="UniProtKB-EC"/>
</dbReference>
<dbReference type="GO" id="GO:0042802">
    <property type="term" value="F:identical protein binding"/>
    <property type="evidence" value="ECO:0007669"/>
    <property type="project" value="TreeGrafter"/>
</dbReference>
<dbReference type="GO" id="GO:0033094">
    <property type="term" value="F:putrescine--2-oxoglutarate transaminase activity"/>
    <property type="evidence" value="ECO:0007669"/>
    <property type="project" value="UniProtKB-UniRule"/>
</dbReference>
<dbReference type="GO" id="GO:0030170">
    <property type="term" value="F:pyridoxal phosphate binding"/>
    <property type="evidence" value="ECO:0007669"/>
    <property type="project" value="UniProtKB-UniRule"/>
</dbReference>
<dbReference type="GO" id="GO:0019477">
    <property type="term" value="P:L-lysine catabolic process"/>
    <property type="evidence" value="ECO:0007669"/>
    <property type="project" value="UniProtKB-UniRule"/>
</dbReference>
<dbReference type="GO" id="GO:0009447">
    <property type="term" value="P:putrescine catabolic process"/>
    <property type="evidence" value="ECO:0007669"/>
    <property type="project" value="UniProtKB-UniRule"/>
</dbReference>
<dbReference type="CDD" id="cd00610">
    <property type="entry name" value="OAT_like"/>
    <property type="match status" value="1"/>
</dbReference>
<dbReference type="FunFam" id="3.40.640.10:FF:000004">
    <property type="entry name" value="Acetylornithine aminotransferase"/>
    <property type="match status" value="1"/>
</dbReference>
<dbReference type="Gene3D" id="3.90.1150.10">
    <property type="entry name" value="Aspartate Aminotransferase, domain 1"/>
    <property type="match status" value="1"/>
</dbReference>
<dbReference type="Gene3D" id="3.40.640.10">
    <property type="entry name" value="Type I PLP-dependent aspartate aminotransferase-like (Major domain)"/>
    <property type="match status" value="1"/>
</dbReference>
<dbReference type="HAMAP" id="MF_01276">
    <property type="entry name" value="Putres_aminotrans_3"/>
    <property type="match status" value="1"/>
</dbReference>
<dbReference type="InterPro" id="IPR005814">
    <property type="entry name" value="Aminotrans_3"/>
</dbReference>
<dbReference type="InterPro" id="IPR049704">
    <property type="entry name" value="Aminotrans_3_PPA_site"/>
</dbReference>
<dbReference type="InterPro" id="IPR050103">
    <property type="entry name" value="Class-III_PLP-dep_AT"/>
</dbReference>
<dbReference type="InterPro" id="IPR017747">
    <property type="entry name" value="Putrescine_aminotransferase"/>
</dbReference>
<dbReference type="InterPro" id="IPR015424">
    <property type="entry name" value="PyrdxlP-dep_Trfase"/>
</dbReference>
<dbReference type="InterPro" id="IPR015421">
    <property type="entry name" value="PyrdxlP-dep_Trfase_major"/>
</dbReference>
<dbReference type="InterPro" id="IPR015422">
    <property type="entry name" value="PyrdxlP-dep_Trfase_small"/>
</dbReference>
<dbReference type="NCBIfam" id="NF008570">
    <property type="entry name" value="PRK11522.1"/>
    <property type="match status" value="1"/>
</dbReference>
<dbReference type="NCBIfam" id="TIGR03372">
    <property type="entry name" value="putres_am_tran"/>
    <property type="match status" value="1"/>
</dbReference>
<dbReference type="PANTHER" id="PTHR11986">
    <property type="entry name" value="AMINOTRANSFERASE CLASS III"/>
    <property type="match status" value="1"/>
</dbReference>
<dbReference type="PANTHER" id="PTHR11986:SF112">
    <property type="entry name" value="PUTRESCINE AMINOTRANSFERASE"/>
    <property type="match status" value="1"/>
</dbReference>
<dbReference type="Pfam" id="PF00202">
    <property type="entry name" value="Aminotran_3"/>
    <property type="match status" value="1"/>
</dbReference>
<dbReference type="PIRSF" id="PIRSF000521">
    <property type="entry name" value="Transaminase_4ab_Lys_Orn"/>
    <property type="match status" value="1"/>
</dbReference>
<dbReference type="SUPFAM" id="SSF53383">
    <property type="entry name" value="PLP-dependent transferases"/>
    <property type="match status" value="1"/>
</dbReference>
<dbReference type="PROSITE" id="PS00600">
    <property type="entry name" value="AA_TRANSFER_CLASS_3"/>
    <property type="match status" value="1"/>
</dbReference>
<sequence length="459" mass="49707">MNRLPSSASALACSAHALNLIEKRTLNHEEMKALNREVIDYFKEHVNPGFLEYRKSVTAGGDYGAVEWQAGSLNTLVDTQGQEFIDCLGGFGIFNVGHRNPVVVSAVQNQLAKQPLHSQELLDPLRAMLAKTLAALTPGKLKYSFFCNSGTESVEAALKLAKAYQSPRGKFTFIATSGAFHGKSLGALSATAKSIFRRPFMPLLPGFRHVPFGNIDAMSMAFSEGKKTGDEIAAVILEPIQGEGGVILPPQGYLTEVRKLCDEFGALMILDEVQTGMGRTGKMFACEHENVQPDILCLAKALGGGVMPIGATIATEEVFSVLFDNPFLHTTTFGGNPLACAAALATINVLLEQNLPAQAEQKGDTLLDGFRQLAREYPNLVHDARGKGMLMAIEFVDNETGYRFASEMFRQRVLVAGTLNNAKTIRIEPPLTLTIELCEQVLKSARNALAAMQVSVEEV</sequence>
<name>PAT_SALPC</name>